<dbReference type="EC" id="3.1.1.4"/>
<dbReference type="EMBL" id="DQ085824">
    <property type="protein sequence ID" value="AAZ22642.1"/>
    <property type="molecule type" value="mRNA"/>
</dbReference>
<dbReference type="SMR" id="Q45Z42"/>
<dbReference type="GO" id="GO:0005576">
    <property type="term" value="C:extracellular region"/>
    <property type="evidence" value="ECO:0007669"/>
    <property type="project" value="UniProtKB-SubCell"/>
</dbReference>
<dbReference type="GO" id="GO:0005509">
    <property type="term" value="F:calcium ion binding"/>
    <property type="evidence" value="ECO:0007669"/>
    <property type="project" value="InterPro"/>
</dbReference>
<dbReference type="GO" id="GO:0047498">
    <property type="term" value="F:calcium-dependent phospholipase A2 activity"/>
    <property type="evidence" value="ECO:0007669"/>
    <property type="project" value="TreeGrafter"/>
</dbReference>
<dbReference type="GO" id="GO:0005543">
    <property type="term" value="F:phospholipid binding"/>
    <property type="evidence" value="ECO:0007669"/>
    <property type="project" value="TreeGrafter"/>
</dbReference>
<dbReference type="GO" id="GO:0090729">
    <property type="term" value="F:toxin activity"/>
    <property type="evidence" value="ECO:0007669"/>
    <property type="project" value="UniProtKB-KW"/>
</dbReference>
<dbReference type="GO" id="GO:0050482">
    <property type="term" value="P:arachidonate secretion"/>
    <property type="evidence" value="ECO:0007669"/>
    <property type="project" value="InterPro"/>
</dbReference>
<dbReference type="GO" id="GO:0016042">
    <property type="term" value="P:lipid catabolic process"/>
    <property type="evidence" value="ECO:0007669"/>
    <property type="project" value="UniProtKB-KW"/>
</dbReference>
<dbReference type="GO" id="GO:0006644">
    <property type="term" value="P:phospholipid metabolic process"/>
    <property type="evidence" value="ECO:0007669"/>
    <property type="project" value="InterPro"/>
</dbReference>
<dbReference type="CDD" id="cd00125">
    <property type="entry name" value="PLA2c"/>
    <property type="match status" value="1"/>
</dbReference>
<dbReference type="FunFam" id="1.20.90.10:FF:000007">
    <property type="entry name" value="Acidic phospholipase A2"/>
    <property type="match status" value="1"/>
</dbReference>
<dbReference type="Gene3D" id="1.20.90.10">
    <property type="entry name" value="Phospholipase A2 domain"/>
    <property type="match status" value="1"/>
</dbReference>
<dbReference type="InterPro" id="IPR001211">
    <property type="entry name" value="PLipase_A2"/>
</dbReference>
<dbReference type="InterPro" id="IPR033112">
    <property type="entry name" value="PLipase_A2_Asp_AS"/>
</dbReference>
<dbReference type="InterPro" id="IPR016090">
    <property type="entry name" value="PLipase_A2_dom"/>
</dbReference>
<dbReference type="InterPro" id="IPR036444">
    <property type="entry name" value="PLipase_A2_dom_sf"/>
</dbReference>
<dbReference type="InterPro" id="IPR033113">
    <property type="entry name" value="PLipase_A2_His_AS"/>
</dbReference>
<dbReference type="PANTHER" id="PTHR11716:SF51">
    <property type="entry name" value="PHOSPHOLIPASE A2"/>
    <property type="match status" value="1"/>
</dbReference>
<dbReference type="PANTHER" id="PTHR11716">
    <property type="entry name" value="PHOSPHOLIPASE A2 FAMILY MEMBER"/>
    <property type="match status" value="1"/>
</dbReference>
<dbReference type="Pfam" id="PF00068">
    <property type="entry name" value="Phospholip_A2_1"/>
    <property type="match status" value="1"/>
</dbReference>
<dbReference type="PRINTS" id="PR00389">
    <property type="entry name" value="PHPHLIPASEA2"/>
</dbReference>
<dbReference type="SMART" id="SM00085">
    <property type="entry name" value="PA2c"/>
    <property type="match status" value="1"/>
</dbReference>
<dbReference type="SUPFAM" id="SSF48619">
    <property type="entry name" value="Phospholipase A2, PLA2"/>
    <property type="match status" value="1"/>
</dbReference>
<dbReference type="PROSITE" id="PS00119">
    <property type="entry name" value="PA2_ASP"/>
    <property type="match status" value="1"/>
</dbReference>
<dbReference type="PROSITE" id="PS00118">
    <property type="entry name" value="PA2_HIS"/>
    <property type="match status" value="1"/>
</dbReference>
<organism>
    <name type="scientific">Oxyuranus microlepidotus</name>
    <name type="common">Inland taipan</name>
    <name type="synonym">Diemenia microlepidota</name>
    <dbReference type="NCBI Taxonomy" id="111177"/>
    <lineage>
        <taxon>Eukaryota</taxon>
        <taxon>Metazoa</taxon>
        <taxon>Chordata</taxon>
        <taxon>Craniata</taxon>
        <taxon>Vertebrata</taxon>
        <taxon>Euteleostomi</taxon>
        <taxon>Lepidosauria</taxon>
        <taxon>Squamata</taxon>
        <taxon>Bifurcata</taxon>
        <taxon>Unidentata</taxon>
        <taxon>Episquamata</taxon>
        <taxon>Toxicofera</taxon>
        <taxon>Serpentes</taxon>
        <taxon>Colubroidea</taxon>
        <taxon>Elapidae</taxon>
        <taxon>Hydrophiinae</taxon>
        <taxon>Oxyuranus</taxon>
    </lineage>
</organism>
<reference key="1">
    <citation type="journal article" date="2005" name="Cell. Mol. Life Sci.">
        <title>Identification and analysis of venom gland-specific genes from the coastal taipan (Oxyuranus scutellatus) and related species.</title>
        <authorList>
            <person name="St Pierre L."/>
            <person name="Woods R."/>
            <person name="Earl S.T.H."/>
            <person name="Masci P.P."/>
            <person name="Lavin M.F."/>
        </authorList>
    </citation>
    <scope>NUCLEOTIDE SEQUENCE [MRNA]</scope>
    <source>
        <tissue>Venom gland</tissue>
    </source>
</reference>
<reference key="2">
    <citation type="journal article" date="2007" name="Neuropharmacology">
        <title>The neuromuscular activity of paradoxin: a presynaptic neurotoxin from the venom of the inland taipan (Oxyuranus microlepidotus).</title>
        <authorList>
            <person name="Hodgson W.C."/>
            <person name="Dal Belo C.A."/>
            <person name="Rowan E.G."/>
        </authorList>
    </citation>
    <scope>FUNCTION</scope>
    <scope>SUBUNIT</scope>
</reference>
<keyword id="KW-0106">Calcium</keyword>
<keyword id="KW-1015">Disulfide bond</keyword>
<keyword id="KW-0378">Hydrolase</keyword>
<keyword id="KW-0442">Lipid degradation</keyword>
<keyword id="KW-0443">Lipid metabolism</keyword>
<keyword id="KW-0479">Metal-binding</keyword>
<keyword id="KW-0528">Neurotoxin</keyword>
<keyword id="KW-0638">Presynaptic neurotoxin</keyword>
<keyword id="KW-0964">Secreted</keyword>
<keyword id="KW-0732">Signal</keyword>
<keyword id="KW-0800">Toxin</keyword>
<evidence type="ECO:0000250" key="1"/>
<evidence type="ECO:0000255" key="2"/>
<evidence type="ECO:0000255" key="3">
    <source>
        <dbReference type="PROSITE-ProRule" id="PRU10035"/>
    </source>
</evidence>
<evidence type="ECO:0000255" key="4">
    <source>
        <dbReference type="PROSITE-ProRule" id="PRU10036"/>
    </source>
</evidence>
<evidence type="ECO:0000269" key="5">
    <source>
    </source>
</evidence>
<evidence type="ECO:0000305" key="6"/>
<feature type="signal peptide" evidence="2">
    <location>
        <begin position="1"/>
        <end position="27"/>
    </location>
</feature>
<feature type="chain" id="PRO_5000140349" description="Basic phospholipase A2 paradoxin-like alpha chain">
    <location>
        <begin position="28"/>
        <end position="146"/>
    </location>
</feature>
<feature type="active site" evidence="1">
    <location>
        <position position="75"/>
    </location>
</feature>
<feature type="active site" evidence="1">
    <location>
        <position position="120"/>
    </location>
</feature>
<feature type="binding site" evidence="1">
    <location>
        <position position="55"/>
    </location>
    <ligand>
        <name>Ca(2+)</name>
        <dbReference type="ChEBI" id="CHEBI:29108"/>
    </ligand>
</feature>
<feature type="binding site" evidence="1">
    <location>
        <position position="57"/>
    </location>
    <ligand>
        <name>Ca(2+)</name>
        <dbReference type="ChEBI" id="CHEBI:29108"/>
    </ligand>
</feature>
<feature type="binding site" evidence="1">
    <location>
        <position position="59"/>
    </location>
    <ligand>
        <name>Ca(2+)</name>
        <dbReference type="ChEBI" id="CHEBI:29108"/>
    </ligand>
</feature>
<feature type="binding site" evidence="1">
    <location>
        <position position="76"/>
    </location>
    <ligand>
        <name>Ca(2+)</name>
        <dbReference type="ChEBI" id="CHEBI:29108"/>
    </ligand>
</feature>
<feature type="disulfide bond" evidence="1">
    <location>
        <begin position="38"/>
        <end position="99"/>
    </location>
</feature>
<feature type="disulfide bond" evidence="1">
    <location>
        <begin position="54"/>
        <end position="145"/>
    </location>
</feature>
<feature type="disulfide bond" evidence="1">
    <location>
        <begin position="56"/>
        <end position="72"/>
    </location>
</feature>
<feature type="disulfide bond" evidence="1">
    <location>
        <begin position="71"/>
        <end position="126"/>
    </location>
</feature>
<feature type="disulfide bond" evidence="1">
    <location>
        <begin position="78"/>
        <end position="119"/>
    </location>
</feature>
<feature type="disulfide bond" evidence="1">
    <location>
        <begin position="88"/>
        <end position="112"/>
    </location>
</feature>
<feature type="disulfide bond" evidence="1">
    <location>
        <begin position="106"/>
        <end position="117"/>
    </location>
</feature>
<sequence>MHPAHLLVLLAVCVSLLGASDIPPLPLNLAQFGFMIKCANHRSRPVSHYMDYGCYCGKGGSGTPVDELDRCCQVHDECYGEAEKRFKCVPYMTLYSWKCYGTAPSCNTKTDCQRFVCNCDAKAAECFARSPYQNKNWNINTKARCK</sequence>
<comment type="function">
    <text evidence="1 5">Heterotrimer: Snake venom phospholipase A2 (PLA2) heterotrimer that acts as a potent presynaptic neurotoxin by blocking synaptic transmission and synaptic vesicle recycling (PubMed:17313963). May act by binding in a calcium-dependent fashion to neurotonal pentraxin-1 (NPTX1) and neurotonal pentraxin-2 (NPTX2), but not to neuronal pentraxin receptor (NPTXR). Also binds to taipoxin-associated calcium binding protein 49 (RCN2), a protein localized in the lumen of endoplasmic reticulum (By similarity).</text>
</comment>
<comment type="function">
    <text evidence="1">Monomer (alpha chain): Snake venom phospholipase A2 (PLA2) alpha chain that possesses the same high enzymatic activity than the heterotrimer. PLA2 catalyzes the calcium-dependent hydrolysis of the 2-acyl groups in 3-sn-phosphoglycerides (By similarity).</text>
</comment>
<comment type="catalytic activity">
    <reaction evidence="3 4">
        <text>a 1,2-diacyl-sn-glycero-3-phosphocholine + H2O = a 1-acyl-sn-glycero-3-phosphocholine + a fatty acid + H(+)</text>
        <dbReference type="Rhea" id="RHEA:15801"/>
        <dbReference type="ChEBI" id="CHEBI:15377"/>
        <dbReference type="ChEBI" id="CHEBI:15378"/>
        <dbReference type="ChEBI" id="CHEBI:28868"/>
        <dbReference type="ChEBI" id="CHEBI:57643"/>
        <dbReference type="ChEBI" id="CHEBI:58168"/>
        <dbReference type="EC" id="3.1.1.4"/>
    </reaction>
</comment>
<comment type="cofactor">
    <cofactor evidence="1">
        <name>Ca(2+)</name>
        <dbReference type="ChEBI" id="CHEBI:29108"/>
    </cofactor>
    <text evidence="1">Binds 1 Ca(2+) ion.</text>
</comment>
<comment type="subunit">
    <text evidence="1">Heterotrimer of alpha, beta, and gamma chains; non-covalently linked.</text>
</comment>
<comment type="subcellular location">
    <subcellularLocation>
        <location evidence="1">Secreted</location>
    </subcellularLocation>
</comment>
<comment type="tissue specificity">
    <text>Expressed by the venom gland.</text>
</comment>
<comment type="similarity">
    <text evidence="6">Belongs to the phospholipase A2 family. Group I subfamily. D49 sub-subfamily.</text>
</comment>
<comment type="caution">
    <text evidence="6">The assignment of paradoxin function to this sequence has been made based on sequence similarity to taipoxin and cannitoxin. The gamma chain has not yet been sequenced.</text>
</comment>
<accession>Q45Z42</accession>
<name>PA2PA_OXYMI</name>
<protein>
    <recommendedName>
        <fullName>Basic phospholipase A2 paradoxin-like alpha chain</fullName>
        <shortName>svPLA2</shortName>
        <ecNumber>3.1.1.4</ecNumber>
    </recommendedName>
    <alternativeName>
        <fullName>PLA-4</fullName>
    </alternativeName>
    <alternativeName>
        <fullName>Phosphatidylcholine 2-acylhydrolase</fullName>
    </alternativeName>
</protein>
<proteinExistence type="evidence at protein level"/>